<comment type="function">
    <text>Binding to cells via a high affinity receptor, laminin is thought to mediate the attachment, migration and organization of cells into tissues during embryonic development by interacting with other extracellular matrix components.</text>
</comment>
<comment type="subunit">
    <text>Laminin is a complex glycoprotein, consisting of three different polypeptide chains (alpha, beta, gamma), which are bound to each other by disulfide bonds into a cross-shaped molecule comprising one long and three short arms with globules at each end.</text>
</comment>
<comment type="subcellular location">
    <subcellularLocation>
        <location evidence="1">Secreted</location>
        <location evidence="1">Extracellular space</location>
        <location evidence="1">Extracellular matrix</location>
    </subcellularLocation>
</comment>
<comment type="tissue specificity">
    <text>Individual glial and muscle cells.</text>
</comment>
<comment type="developmental stage">
    <text>Embryonic development.</text>
</comment>
<comment type="domain">
    <text>The alpha-helical domains I and II are thought to interact with other laminin chains to form a coiled coil structure.</text>
</comment>
<proteinExistence type="evidence at transcript level"/>
<accession>Q25092</accession>
<feature type="chain" id="PRO_0000086855" description="Laminin subunit B">
    <location>
        <begin position="1" status="less than"/>
        <end position="400" status="greater than"/>
    </location>
</feature>
<feature type="domain" description="Laminin EGF-like 1" evidence="3">
    <location>
        <begin position="1" status="less than"/>
        <end position="5"/>
    </location>
</feature>
<feature type="domain" description="Laminin EGF-like 2" evidence="3">
    <location>
        <begin position="6"/>
        <end position="53"/>
    </location>
</feature>
<feature type="domain" description="Laminin EGF-like 3" evidence="3">
    <location>
        <begin position="54"/>
        <end position="100"/>
    </location>
</feature>
<feature type="region of interest" description="Domain II and I">
    <location>
        <begin position="101"/>
        <end position="400" status="greater than"/>
    </location>
</feature>
<feature type="region of interest" description="Disordered" evidence="4">
    <location>
        <begin position="369"/>
        <end position="400"/>
    </location>
</feature>
<feature type="coiled-coil region" evidence="2">
    <location>
        <begin position="140"/>
        <end position="235"/>
    </location>
</feature>
<feature type="coiled-coil region" evidence="2">
    <location>
        <begin position="353"/>
        <end position="400" status="greater than"/>
    </location>
</feature>
<feature type="compositionally biased region" description="Low complexity" evidence="4">
    <location>
        <begin position="371"/>
        <end position="383"/>
    </location>
</feature>
<feature type="glycosylation site" description="N-linked (GlcNAc...) asparagine" evidence="2">
    <location>
        <position position="160"/>
    </location>
</feature>
<feature type="glycosylation site" description="N-linked (GlcNAc...) asparagine" evidence="2">
    <location>
        <position position="175"/>
    </location>
</feature>
<feature type="glycosylation site" description="N-linked (GlcNAc...) asparagine" evidence="2">
    <location>
        <position position="216"/>
    </location>
</feature>
<feature type="glycosylation site" description="N-linked (GlcNAc...) asparagine" evidence="2">
    <location>
        <position position="266"/>
    </location>
</feature>
<feature type="glycosylation site" description="N-linked (GlcNAc...) asparagine" evidence="2">
    <location>
        <position position="283"/>
    </location>
</feature>
<feature type="glycosylation site" description="N-linked (GlcNAc...) asparagine" evidence="2">
    <location>
        <position position="310"/>
    </location>
</feature>
<feature type="glycosylation site" description="N-linked (GlcNAc...) asparagine" evidence="2">
    <location>
        <position position="356"/>
    </location>
</feature>
<feature type="disulfide bond" evidence="3">
    <location>
        <begin position="6"/>
        <end position="18"/>
    </location>
</feature>
<feature type="disulfide bond" evidence="3">
    <location>
        <begin position="8"/>
        <end position="25"/>
    </location>
</feature>
<feature type="disulfide bond" evidence="3">
    <location>
        <begin position="27"/>
        <end position="36"/>
    </location>
</feature>
<feature type="disulfide bond" evidence="3">
    <location>
        <begin position="39"/>
        <end position="51"/>
    </location>
</feature>
<feature type="disulfide bond" evidence="3">
    <location>
        <begin position="54"/>
        <end position="66"/>
    </location>
</feature>
<feature type="disulfide bond" evidence="3">
    <location>
        <begin position="56"/>
        <end position="73"/>
    </location>
</feature>
<feature type="disulfide bond" evidence="3">
    <location>
        <begin position="75"/>
        <end position="84"/>
    </location>
</feature>
<feature type="disulfide bond" evidence="3">
    <location>
        <begin position="87"/>
        <end position="98"/>
    </location>
</feature>
<feature type="disulfide bond" description="Interchain" evidence="5">
    <location>
        <position position="101"/>
    </location>
</feature>
<feature type="disulfide bond" description="Interchain" evidence="5">
    <location>
        <position position="104"/>
    </location>
</feature>
<feature type="non-terminal residue">
    <location>
        <position position="1"/>
    </location>
</feature>
<feature type="non-terminal residue">
    <location>
        <position position="400"/>
    </location>
</feature>
<evidence type="ECO:0000250" key="1"/>
<evidence type="ECO:0000255" key="2"/>
<evidence type="ECO:0000255" key="3">
    <source>
        <dbReference type="PROSITE-ProRule" id="PRU00460"/>
    </source>
</evidence>
<evidence type="ECO:0000256" key="4">
    <source>
        <dbReference type="SAM" id="MobiDB-lite"/>
    </source>
</evidence>
<evidence type="ECO:0000305" key="5"/>
<reference key="1">
    <citation type="journal article" date="1995" name="J. Neurobiol.">
        <title>In situ hybridization reveals transient laminin B-chain expression by individual glial and muscle cells in embryonic leech central nervous system.</title>
        <authorList>
            <person name="Luebke A.E."/>
            <person name="Dickerson I.M."/>
            <person name="Muller K.J."/>
        </authorList>
    </citation>
    <scope>NUCLEOTIDE SEQUENCE [MRNA]</scope>
</reference>
<organism>
    <name type="scientific">Hirudo medicinalis</name>
    <name type="common">Medicinal leech</name>
    <dbReference type="NCBI Taxonomy" id="6421"/>
    <lineage>
        <taxon>Eukaryota</taxon>
        <taxon>Metazoa</taxon>
        <taxon>Spiralia</taxon>
        <taxon>Lophotrochozoa</taxon>
        <taxon>Annelida</taxon>
        <taxon>Clitellata</taxon>
        <taxon>Hirudinea</taxon>
        <taxon>Hirudinida</taxon>
        <taxon>Hirudiniformes</taxon>
        <taxon>Hirudinidae</taxon>
        <taxon>Hirudo</taxon>
    </lineage>
</organism>
<protein>
    <recommendedName>
        <fullName>Laminin subunit B</fullName>
    </recommendedName>
</protein>
<name>LAMB_HIRME</name>
<sequence length="400" mass="43262">EGCKPCECDKSGSRLEQCNLYDGQCDCVDGRGGRDCSQCPEMSWGDPFLGCKSCTCNPDGARSLYCNKVTGQCECPRGVTGLNCDRCDRGTYGALPQCIPCGECFDNWDKLIAQLRDEAAAQLRIGTEIKLSGPPGAFAKEFEELEQVLMDMKSHVNSANVSSDQLENIDQELDNLSSKLKDLKPNLASHGSRTGEASVKISELYSRVLNLQSEFNKSSAKTKELRENALEIQEQDVSGAYASIQESLVKSSALQAKLTDAENSKNISVYFRTSVEHFLQNSNFSDANSENGNENSLDKVVEFMKAVDENVSSINTELCGGTGSPCHEDCGGAMCGKCGGELCGDGAVTKAVEAKNTSRKAEELIKSKYRSTSSTLSELENSNKQCKQATAEAKNNAHEA</sequence>
<dbReference type="EMBL" id="U34921">
    <property type="protein sequence ID" value="AAC46862.1"/>
    <property type="molecule type" value="mRNA"/>
</dbReference>
<dbReference type="SMR" id="Q25092"/>
<dbReference type="GO" id="GO:0005576">
    <property type="term" value="C:extracellular region"/>
    <property type="evidence" value="ECO:0007669"/>
    <property type="project" value="UniProtKB-KW"/>
</dbReference>
<dbReference type="CDD" id="cd00055">
    <property type="entry name" value="EGF_Lam"/>
    <property type="match status" value="2"/>
</dbReference>
<dbReference type="FunFam" id="2.10.25.10:FF:000135">
    <property type="entry name" value="Laminin subunit beta 4"/>
    <property type="match status" value="1"/>
</dbReference>
<dbReference type="Gene3D" id="2.10.25.10">
    <property type="entry name" value="Laminin"/>
    <property type="match status" value="2"/>
</dbReference>
<dbReference type="InterPro" id="IPR002049">
    <property type="entry name" value="LE_dom"/>
</dbReference>
<dbReference type="Pfam" id="PF00053">
    <property type="entry name" value="EGF_laminin"/>
    <property type="match status" value="2"/>
</dbReference>
<dbReference type="PRINTS" id="PR00011">
    <property type="entry name" value="EGFLAMININ"/>
</dbReference>
<dbReference type="SMART" id="SM00180">
    <property type="entry name" value="EGF_Lam"/>
    <property type="match status" value="2"/>
</dbReference>
<dbReference type="SUPFAM" id="SSF57196">
    <property type="entry name" value="EGF/Laminin"/>
    <property type="match status" value="1"/>
</dbReference>
<dbReference type="PROSITE" id="PS00022">
    <property type="entry name" value="EGF_1"/>
    <property type="match status" value="2"/>
</dbReference>
<dbReference type="PROSITE" id="PS01248">
    <property type="entry name" value="EGF_LAM_1"/>
    <property type="match status" value="2"/>
</dbReference>
<dbReference type="PROSITE" id="PS50027">
    <property type="entry name" value="EGF_LAM_2"/>
    <property type="match status" value="2"/>
</dbReference>
<keyword id="KW-0175">Coiled coil</keyword>
<keyword id="KW-1015">Disulfide bond</keyword>
<keyword id="KW-0272">Extracellular matrix</keyword>
<keyword id="KW-0325">Glycoprotein</keyword>
<keyword id="KW-0424">Laminin EGF-like domain</keyword>
<keyword id="KW-0677">Repeat</keyword>
<keyword id="KW-0964">Secreted</keyword>